<keyword id="KW-0169">Cobalamin biosynthesis</keyword>
<keyword id="KW-0315">Glutamine amidotransferase</keyword>
<keyword id="KW-1185">Reference proteome</keyword>
<evidence type="ECO:0000255" key="1">
    <source>
        <dbReference type="HAMAP-Rule" id="MF_00028"/>
    </source>
</evidence>
<name>COBQ_NOSP7</name>
<gene>
    <name evidence="1" type="primary">cobQ</name>
    <name type="ordered locus">Npun_F0495</name>
</gene>
<comment type="function">
    <text evidence="1">Catalyzes amidations at positions B, D, E, and G on adenosylcobyrinic A,C-diamide. NH(2) groups are provided by glutamine, and one molecule of ATP is hydrogenolyzed for each amidation.</text>
</comment>
<comment type="pathway">
    <text evidence="1">Cofactor biosynthesis; adenosylcobalamin biosynthesis.</text>
</comment>
<comment type="similarity">
    <text evidence="1">Belongs to the CobB/CobQ family. CobQ subfamily.</text>
</comment>
<feature type="chain" id="PRO_1000090237" description="Cobyric acid synthase">
    <location>
        <begin position="1"/>
        <end position="494"/>
    </location>
</feature>
<feature type="domain" description="GATase cobBQ-type" evidence="1">
    <location>
        <begin position="252"/>
        <end position="444"/>
    </location>
</feature>
<feature type="active site" description="Nucleophile" evidence="1">
    <location>
        <position position="333"/>
    </location>
</feature>
<feature type="active site" evidence="1">
    <location>
        <position position="436"/>
    </location>
</feature>
<dbReference type="EMBL" id="CP001037">
    <property type="protein sequence ID" value="ACC79272.1"/>
    <property type="molecule type" value="Genomic_DNA"/>
</dbReference>
<dbReference type="RefSeq" id="WP_012407297.1">
    <property type="nucleotide sequence ID" value="NC_010628.1"/>
</dbReference>
<dbReference type="SMR" id="B2J764"/>
<dbReference type="STRING" id="63737.Npun_F0495"/>
<dbReference type="EnsemblBacteria" id="ACC79272">
    <property type="protein sequence ID" value="ACC79272"/>
    <property type="gene ID" value="Npun_F0495"/>
</dbReference>
<dbReference type="KEGG" id="npu:Npun_F0495"/>
<dbReference type="eggNOG" id="COG1492">
    <property type="taxonomic scope" value="Bacteria"/>
</dbReference>
<dbReference type="HOGENOM" id="CLU_019250_2_2_3"/>
<dbReference type="OrthoDB" id="9808302at2"/>
<dbReference type="PhylomeDB" id="B2J764"/>
<dbReference type="UniPathway" id="UPA00148"/>
<dbReference type="Proteomes" id="UP000001191">
    <property type="component" value="Chromosome"/>
</dbReference>
<dbReference type="GO" id="GO:0015420">
    <property type="term" value="F:ABC-type vitamin B12 transporter activity"/>
    <property type="evidence" value="ECO:0007669"/>
    <property type="project" value="UniProtKB-UniRule"/>
</dbReference>
<dbReference type="GO" id="GO:0003824">
    <property type="term" value="F:catalytic activity"/>
    <property type="evidence" value="ECO:0007669"/>
    <property type="project" value="InterPro"/>
</dbReference>
<dbReference type="GO" id="GO:0009236">
    <property type="term" value="P:cobalamin biosynthetic process"/>
    <property type="evidence" value="ECO:0007669"/>
    <property type="project" value="UniProtKB-UniRule"/>
</dbReference>
<dbReference type="CDD" id="cd05389">
    <property type="entry name" value="CobQ_N"/>
    <property type="match status" value="1"/>
</dbReference>
<dbReference type="CDD" id="cd01750">
    <property type="entry name" value="GATase1_CobQ"/>
    <property type="match status" value="1"/>
</dbReference>
<dbReference type="Gene3D" id="3.40.50.880">
    <property type="match status" value="1"/>
</dbReference>
<dbReference type="Gene3D" id="3.40.50.300">
    <property type="entry name" value="P-loop containing nucleotide triphosphate hydrolases"/>
    <property type="match status" value="1"/>
</dbReference>
<dbReference type="HAMAP" id="MF_00028">
    <property type="entry name" value="CobQ"/>
    <property type="match status" value="1"/>
</dbReference>
<dbReference type="InterPro" id="IPR029062">
    <property type="entry name" value="Class_I_gatase-like"/>
</dbReference>
<dbReference type="InterPro" id="IPR002586">
    <property type="entry name" value="CobQ/CobB/MinD/ParA_Nub-bd_dom"/>
</dbReference>
<dbReference type="InterPro" id="IPR033949">
    <property type="entry name" value="CobQ_GATase1"/>
</dbReference>
<dbReference type="InterPro" id="IPR047045">
    <property type="entry name" value="CobQ_N"/>
</dbReference>
<dbReference type="InterPro" id="IPR004459">
    <property type="entry name" value="CobQ_synth"/>
</dbReference>
<dbReference type="InterPro" id="IPR011698">
    <property type="entry name" value="GATase_3"/>
</dbReference>
<dbReference type="InterPro" id="IPR027417">
    <property type="entry name" value="P-loop_NTPase"/>
</dbReference>
<dbReference type="NCBIfam" id="TIGR00313">
    <property type="entry name" value="cobQ"/>
    <property type="match status" value="1"/>
</dbReference>
<dbReference type="NCBIfam" id="NF001989">
    <property type="entry name" value="PRK00784.1"/>
    <property type="match status" value="1"/>
</dbReference>
<dbReference type="PANTHER" id="PTHR21343:SF1">
    <property type="entry name" value="COBYRIC ACID SYNTHASE"/>
    <property type="match status" value="1"/>
</dbReference>
<dbReference type="PANTHER" id="PTHR21343">
    <property type="entry name" value="DETHIOBIOTIN SYNTHETASE"/>
    <property type="match status" value="1"/>
</dbReference>
<dbReference type="Pfam" id="PF01656">
    <property type="entry name" value="CbiA"/>
    <property type="match status" value="1"/>
</dbReference>
<dbReference type="Pfam" id="PF07685">
    <property type="entry name" value="GATase_3"/>
    <property type="match status" value="1"/>
</dbReference>
<dbReference type="SUPFAM" id="SSF52317">
    <property type="entry name" value="Class I glutamine amidotransferase-like"/>
    <property type="match status" value="1"/>
</dbReference>
<dbReference type="SUPFAM" id="SSF52540">
    <property type="entry name" value="P-loop containing nucleoside triphosphate hydrolases"/>
    <property type="match status" value="1"/>
</dbReference>
<dbReference type="PROSITE" id="PS51274">
    <property type="entry name" value="GATASE_COBBQ"/>
    <property type="match status" value="1"/>
</dbReference>
<accession>B2J764</accession>
<organism>
    <name type="scientific">Nostoc punctiforme (strain ATCC 29133 / PCC 73102)</name>
    <dbReference type="NCBI Taxonomy" id="63737"/>
    <lineage>
        <taxon>Bacteria</taxon>
        <taxon>Bacillati</taxon>
        <taxon>Cyanobacteriota</taxon>
        <taxon>Cyanophyceae</taxon>
        <taxon>Nostocales</taxon>
        <taxon>Nostocaceae</taxon>
        <taxon>Nostoc</taxon>
    </lineage>
</organism>
<reference key="1">
    <citation type="journal article" date="2013" name="Plant Physiol.">
        <title>A Nostoc punctiforme Sugar Transporter Necessary to Establish a Cyanobacterium-Plant Symbiosis.</title>
        <authorList>
            <person name="Ekman M."/>
            <person name="Picossi S."/>
            <person name="Campbell E.L."/>
            <person name="Meeks J.C."/>
            <person name="Flores E."/>
        </authorList>
    </citation>
    <scope>NUCLEOTIDE SEQUENCE [LARGE SCALE GENOMIC DNA]</scope>
    <source>
        <strain>ATCC 29133 / PCC 73102</strain>
    </source>
</reference>
<sequence>MKSIMVVGTTSHAGKSLLTTAICRILSRRGWRVAPFKGQNMALNAYVTASGGEIGYAQAVQAWAAGVVPWVEMNPILLKPQGDMTSQVIIKGRSVGKVSASDYYEQYFELGWRTIEESLQHLGTEFDLLVCEGAGSPAEINLKHRDLTNMRVAKYLNAPTMLVVDIDRGGAFAHVVGTLELLEPDERALIKGVVINKFRGQRSLLDPGIKWLEERTGIPVIGVIPYLQEVFSTEDSLDLLERQSSSSKAQTDLNIAVIRLPRIANFTDFDPLESESTVSVKYLSPKQDLGHPDAVIIPGTKTTIADLLLLQKSGMAEAIQHYAASGGTVLGICGGYQMLGQIIADPEGIEGQAGRFQGLNLLPIRTVITGQKIARQRQVSSNYPQQGLPVNGFEIHQGRSRIEQQGIDPQSYHALFDDINLGLVDSCQSVWGSYLHGLFDNGPWRRAWLNRLRQQRGLKSLPTGVANYREQREQILDSLATEVESHLDLTPFLS</sequence>
<protein>
    <recommendedName>
        <fullName evidence="1">Cobyric acid synthase</fullName>
    </recommendedName>
</protein>
<proteinExistence type="inferred from homology"/>